<reference evidence="7" key="1">
    <citation type="journal article" date="2001" name="Arch. Biochem. Biophys.">
        <title>First simultaneous isolation of a ribosome inactivating protein and an antifungal protein from a mushroom (Lyophyllum shimeji) together with evidence for synergism of their antifungal effects.</title>
        <authorList>
            <person name="Lam S.K."/>
            <person name="Ng T.B."/>
        </authorList>
    </citation>
    <scope>PROTEIN SEQUENCE OF 1-40</scope>
    <scope>FUNCTION</scope>
    <scope>CATALYTIC ACTIVITY</scope>
    <source>
        <tissue evidence="4">Fruiting body</tissue>
    </source>
</reference>
<reference evidence="7" key="2">
    <citation type="journal article" date="2010" name="Appl. Microbiol. Biotechnol.">
        <title>The mushroom ribosome-inactivating protein lyophyllin exerts deleterious effects on mouse embryonic development in vitro.</title>
        <authorList>
            <person name="Chan W.Y."/>
            <person name="Ng T.B."/>
            <person name="Lam J.S."/>
            <person name="Wong J.H."/>
            <person name="Chu K.T."/>
            <person name="Ngai P.H."/>
            <person name="Lam S.K."/>
            <person name="Wang H.X."/>
        </authorList>
    </citation>
    <scope>PROTEIN SEQUENCE OF 1-30</scope>
    <scope>FUNCTION</scope>
    <source>
        <tissue evidence="5">Fruiting body</tissue>
    </source>
</reference>
<reference evidence="7" key="3">
    <citation type="journal article" date="2021" name="Int. J. Mol. Sci.">
        <title>Lyophyllin, a Mushroom Protein from the Peptidase M35 Superfamily Is an RNA N-Glycosidase.</title>
        <authorList>
            <person name="Lu J.Q."/>
            <person name="Shi W.W."/>
            <person name="Xiao M.J."/>
            <person name="Tang Y.S."/>
            <person name="Zheng Y.T."/>
            <person name="Shaw P.C."/>
        </authorList>
    </citation>
    <scope>PROTEIN SEQUENCE OF 1-18 AND 41-50</scope>
    <scope>FUNCTION</scope>
    <scope>CATALYTIC ACTIVITY</scope>
    <source>
        <tissue evidence="6">Fruiting body</tissue>
    </source>
</reference>
<accession>C0HLZ4</accession>
<proteinExistence type="evidence at protein level"/>
<evidence type="ECO:0000269" key="1">
    <source>
    </source>
</evidence>
<evidence type="ECO:0000269" key="2">
    <source>
    </source>
</evidence>
<evidence type="ECO:0000269" key="3">
    <source>
    </source>
</evidence>
<evidence type="ECO:0000303" key="4">
    <source>
    </source>
</evidence>
<evidence type="ECO:0000303" key="5">
    <source>
    </source>
</evidence>
<evidence type="ECO:0000303" key="6">
    <source>
    </source>
</evidence>
<evidence type="ECO:0000305" key="7"/>
<organism evidence="4">
    <name type="scientific">Lyophyllum shimeji</name>
    <name type="common">Hon-shimeji</name>
    <name type="synonym">Tricholoma shimeji</name>
    <dbReference type="NCBI Taxonomy" id="47721"/>
    <lineage>
        <taxon>Eukaryota</taxon>
        <taxon>Fungi</taxon>
        <taxon>Dikarya</taxon>
        <taxon>Basidiomycota</taxon>
        <taxon>Agaricomycotina</taxon>
        <taxon>Agaricomycetes</taxon>
        <taxon>Agaricomycetidae</taxon>
        <taxon>Agaricales</taxon>
        <taxon>Tricholomatineae</taxon>
        <taxon>Lyophyllaceae</taxon>
        <taxon>Lyophyllum</taxon>
    </lineage>
</organism>
<sequence>ITFQGCSPARQTVITNAITRARADVRAAVSALPTKAPVSTFSTWFGVYND</sequence>
<name>LYOPH_LYOSH</name>
<dbReference type="EC" id="3.2.2.22" evidence="1 3"/>
<dbReference type="SMR" id="C0HLZ4"/>
<dbReference type="GO" id="GO:0008237">
    <property type="term" value="F:metallopeptidase activity"/>
    <property type="evidence" value="ECO:0007669"/>
    <property type="project" value="InterPro"/>
</dbReference>
<dbReference type="GO" id="GO:0030598">
    <property type="term" value="F:rRNA N-glycosylase activity"/>
    <property type="evidence" value="ECO:0000314"/>
    <property type="project" value="UniProtKB"/>
</dbReference>
<dbReference type="GO" id="GO:0090729">
    <property type="term" value="F:toxin activity"/>
    <property type="evidence" value="ECO:0007669"/>
    <property type="project" value="UniProtKB-KW"/>
</dbReference>
<dbReference type="GO" id="GO:0050832">
    <property type="term" value="P:defense response to fungus"/>
    <property type="evidence" value="ECO:0000314"/>
    <property type="project" value="UniProtKB"/>
</dbReference>
<dbReference type="GO" id="GO:0031640">
    <property type="term" value="P:killing of cells of another organism"/>
    <property type="evidence" value="ECO:0007669"/>
    <property type="project" value="UniProtKB-KW"/>
</dbReference>
<dbReference type="GO" id="GO:0017148">
    <property type="term" value="P:negative regulation of translation"/>
    <property type="evidence" value="ECO:0007669"/>
    <property type="project" value="UniProtKB-KW"/>
</dbReference>
<dbReference type="Gene3D" id="3.40.390.10">
    <property type="entry name" value="Collagenase (Catalytic Domain)"/>
    <property type="match status" value="1"/>
</dbReference>
<dbReference type="InterPro" id="IPR024079">
    <property type="entry name" value="MetalloPept_cat_dom_sf"/>
</dbReference>
<keyword id="KW-0929">Antimicrobial</keyword>
<keyword id="KW-0903">Direct protein sequencing</keyword>
<keyword id="KW-0295">Fungicide</keyword>
<keyword id="KW-0378">Hydrolase</keyword>
<keyword id="KW-0652">Protein synthesis inhibitor</keyword>
<keyword id="KW-0800">Toxin</keyword>
<comment type="function">
    <text evidence="1 2 3">N-glycosylase that inhibits protein synthesis by depurinating ribosomal rRNA, and thus acts as a ribosomal inactivating protein (RIP) (PubMed:11556814, PubMed:34769028). Has adenine polynucleotide glycosidase activity on the poly(A) substrate A30-ssDNA (PubMed:11556814). Inhibits cell-free translation in rabbit reticulocyte lysate system with an IC(50) of 1 nM (PubMed:11556814, PubMed:34769028). May function in the defense response to pathogens (PubMed:11556814). Displays antifungal activity against C.comatus and P.piricola, but not against R.solani, M.arachidicola and C.gossypii (PubMed:11556814). Inhibits mycelial growth in P.piricola with an IC(50) of 2.5 uM (PubMed:11556814). Has cytotoxic activity against the human cancer cell lines Hela, HepG2, and JAR, with IC(50) of 358.8, 489.8, and 926.9 nM respectively (PubMed:34769028). It also inhibits HIV-1 reverse transcriptase activity (IC(50)=7.9 nM) and disrupts mouse embryonic development (PubMed:11556814, PubMed:19568748).</text>
</comment>
<comment type="catalytic activity">
    <reaction evidence="1 3">
        <text>Endohydrolysis of the N-glycosidic bond at one specific adenosine on the 28S rRNA.</text>
        <dbReference type="EC" id="3.2.2.22"/>
    </reaction>
</comment>
<feature type="chain" id="PRO_0000455337" description="Ribosome-inactivating protein lyophyllin">
    <location>
        <begin position="1"/>
        <end position="50"/>
    </location>
</feature>
<feature type="non-consecutive residues" evidence="6">
    <location>
        <begin position="40"/>
        <end position="41"/>
    </location>
</feature>
<feature type="non-terminal residue" evidence="6">
    <location>
        <position position="50"/>
    </location>
</feature>
<protein>
    <recommendedName>
        <fullName evidence="4">Ribosome-inactivating protein lyophyllin</fullName>
        <ecNumber evidence="1 3">3.2.2.22</ecNumber>
    </recommendedName>
</protein>